<sequence>MDGDSSSSSGGSGPAPGPGPEGEQRPEGEPLAPDGGSPDSTQTKAVPPEASPERSCSLHSCPLEDPSSSSGPPPTTSTLQPVGPSSPLAPAHFTYPRALQEYQGGSSLPGLGDRAALCSHGSSLSPSPAPSQRDGTWKPPAVQHHVVSVRQERAFQMPKSYSQLIAEWPVAVLMLCLAVIFLCTLAGLLGARLPDFSKPLLGFEPRDTDIGSKLVVWRALQALTGPRKLLFLSPDLELNSSSSHNTLRPAPRGSAQESAVRPRRMVEPLEDRRQENFFCGPPEKSYAKLVFMSTSSGSLWNLHAIHSMCRMEQDQIRSHTSFGALCQRTAANQCCPSWSLGNYLAVLSNRSSCLDTTQADAARTLALLRTCALYYHSGALVPSCLGPGQNKSPRCAQVPTKCSQSSAIYQLLHFLLDRDFLSPQTTDYQVPSLKYSLLFLPTPKGASLMDIYLDRLATPWGLADNYTSVTGMDLGLKQELLRHFLVQDTVYPLLALVAIFFGMALYLRSLFLTLMVLLGVLGSLLVAFFLYQVAFRMAYFPFVNLAALLLLSSVCANHTLIFFDLWRLSKSQLPSGGLAQRVGRTMHHFGYLLLVSGLTTSAAFYASYLSRLPAVRCLALFMGTAVLVHLALTLVWLPASAVLHERYLARGCARRARGRWEGSAPRRLLLALHRRLRGLRRAAAGTSRLLFQRLLPCGVIKFRYIWICWFAALAAGGAYIAGVSPRLRLPTLPPPGGQVFRPSHPFERFDAEYRQLFLFEQLPQGEGGHMPVVLVWGVLPVDTGDPLDPRSNSSLVRDPAFSASGPEAQRWLLALCHRARNQSFFDTLQEGWPTLCFVETLQRWMESPSCARLGPDLCCGHSDFPWAPQFFLHCLKMMALEQGPDGTQDLGLRFDAHGSLAALVLQFQTNFRNSPDYNQTQLFYNEVSHWLAAELGMAPPGLRRGWFTSRLELYSLQHSLSTEPAVVLGLALALAFATLLLGTWNVPLSLFSVAAVAGTVLLTVGLLVLLEWQLNTAEALFLSASVGLSVDFTVNYCISYHLCPHPDRLSRVAFSLRQTSCATAVGAAALFAAGVLMLPATVLLYRKLGIILMMVKCVSCGFASFFFQSLCCFFGPEKNCGQILWPCAHLPWDAGTGDPGGEKAGRPRPGSVGGMPGSCSEQYELQPLARRRSPSFDTSTATSKLSHRPSVLSEDLQLHDGPCCSRPPPAPASPRELLLDHQAVFSQCPALQTSSPYKQAGPSPKTRARQDSQGEEAEPLPASPEAPAHSPKAKAADPPDGFCSSASTLEGLSVSDETCLSTSEPSARVPDSVGVSPDDLDDTGQPVLERGQLNGKRDTLWLALRETVYDPSLPASHHSSLSWKGRGGPGDGSPVVLPNSQPDLPDVWLRRPSTHTSGYSS</sequence>
<feature type="chain" id="PRO_0000310696" description="Protein dispatched homolog 2">
    <location>
        <begin position="1"/>
        <end position="1401"/>
    </location>
</feature>
<feature type="transmembrane region" description="Helical" evidence="2">
    <location>
        <begin position="170"/>
        <end position="190"/>
    </location>
</feature>
<feature type="transmembrane region" description="Helical" evidence="2">
    <location>
        <begin position="484"/>
        <end position="504"/>
    </location>
</feature>
<feature type="transmembrane region" description="Helical" evidence="2">
    <location>
        <begin position="510"/>
        <end position="530"/>
    </location>
</feature>
<feature type="transmembrane region" description="Helical" evidence="2">
    <location>
        <begin position="542"/>
        <end position="562"/>
    </location>
</feature>
<feature type="transmembrane region" description="Helical" evidence="2">
    <location>
        <begin position="589"/>
        <end position="609"/>
    </location>
</feature>
<feature type="transmembrane region" description="Helical" evidence="2">
    <location>
        <begin position="617"/>
        <end position="637"/>
    </location>
</feature>
<feature type="transmembrane region" description="Helical" evidence="2">
    <location>
        <begin position="704"/>
        <end position="724"/>
    </location>
</feature>
<feature type="transmembrane region" description="Helical" evidence="2">
    <location>
        <begin position="964"/>
        <end position="984"/>
    </location>
</feature>
<feature type="transmembrane region" description="Helical" evidence="2">
    <location>
        <begin position="990"/>
        <end position="1010"/>
    </location>
</feature>
<feature type="transmembrane region" description="Helical" evidence="2">
    <location>
        <begin position="1019"/>
        <end position="1039"/>
    </location>
</feature>
<feature type="transmembrane region" description="Helical" evidence="2">
    <location>
        <begin position="1064"/>
        <end position="1084"/>
    </location>
</feature>
<feature type="transmembrane region" description="Helical" evidence="2">
    <location>
        <begin position="1088"/>
        <end position="1108"/>
    </location>
</feature>
<feature type="domain" description="SSD" evidence="3">
    <location>
        <begin position="471"/>
        <end position="643"/>
    </location>
</feature>
<feature type="region of interest" description="Disordered" evidence="4">
    <location>
        <begin position="1"/>
        <end position="91"/>
    </location>
</feature>
<feature type="region of interest" description="Disordered" evidence="4">
    <location>
        <begin position="113"/>
        <end position="138"/>
    </location>
</feature>
<feature type="region of interest" description="Disordered" evidence="4">
    <location>
        <begin position="241"/>
        <end position="264"/>
    </location>
</feature>
<feature type="region of interest" description="Disordered" evidence="4">
    <location>
        <begin position="1169"/>
        <end position="1192"/>
    </location>
</feature>
<feature type="region of interest" description="Disordered" evidence="4">
    <location>
        <begin position="1229"/>
        <end position="1337"/>
    </location>
</feature>
<feature type="region of interest" description="Disordered" evidence="4">
    <location>
        <begin position="1352"/>
        <end position="1401"/>
    </location>
</feature>
<feature type="compositionally biased region" description="Polar residues" evidence="4">
    <location>
        <begin position="1175"/>
        <end position="1184"/>
    </location>
</feature>
<feature type="compositionally biased region" description="Low complexity" evidence="4">
    <location>
        <begin position="1259"/>
        <end position="1270"/>
    </location>
</feature>
<feature type="compositionally biased region" description="Polar residues" evidence="4">
    <location>
        <begin position="1284"/>
        <end position="1305"/>
    </location>
</feature>
<feature type="compositionally biased region" description="Low complexity" evidence="4">
    <location>
        <begin position="1352"/>
        <end position="1362"/>
    </location>
</feature>
<feature type="modified residue" description="Omega-N-methylarginine" evidence="1">
    <location>
        <position position="1366"/>
    </location>
</feature>
<feature type="glycosylation site" description="N-linked (GlcNAc...) asparagine" evidence="2">
    <location>
        <position position="239"/>
    </location>
</feature>
<feature type="glycosylation site" description="N-linked (GlcNAc...) asparagine" evidence="2">
    <location>
        <position position="349"/>
    </location>
</feature>
<feature type="glycosylation site" description="N-linked (GlcNAc...) asparagine" evidence="2">
    <location>
        <position position="465"/>
    </location>
</feature>
<feature type="sequence variant" id="VAR_037078" description="In dbSNP:rs1898883." evidence="5 6">
    <original>P</original>
    <variation>A</variation>
    <location>
        <position position="47"/>
    </location>
</feature>
<feature type="sequence variant" id="VAR_037079" description="In dbSNP:rs1898882." evidence="5 6">
    <original>C</original>
    <variation>S</variation>
    <location>
        <position position="56"/>
    </location>
</feature>
<feature type="sequence variant" id="VAR_037080" description="In dbSNP:rs35043215.">
    <original>G</original>
    <variation>E</variation>
    <location>
        <position position="388"/>
    </location>
</feature>
<feature type="sequence variant" id="VAR_037081" description="In dbSNP:rs2412512.">
    <original>G</original>
    <variation>S</variation>
    <location>
        <position position="1145"/>
    </location>
</feature>
<feature type="sequence variant" id="VAR_037082" description="In dbSNP:rs3743142.">
    <original>R</original>
    <variation>W</variation>
    <location>
        <position position="1247"/>
    </location>
</feature>
<feature type="sequence conflict" description="In Ref. 1; BAB21833." evidence="7" ref="1">
    <original>S</original>
    <variation>F</variation>
    <location>
        <position position="67"/>
    </location>
</feature>
<feature type="sequence conflict" description="In Ref. 1; BAB21833." evidence="7" ref="1">
    <original>S</original>
    <variation>L</variation>
    <location>
        <position position="70"/>
    </location>
</feature>
<feature type="sequence conflict" description="In Ref. 1; BAB21833." evidence="7" ref="1">
    <original>S</original>
    <variation>F</variation>
    <location>
        <position position="77"/>
    </location>
</feature>
<feature type="sequence conflict" description="In Ref. 1; BAB21833." evidence="7" ref="1">
    <original>P</original>
    <variation>T</variation>
    <location>
        <position position="96"/>
    </location>
</feature>
<name>DISP2_HUMAN</name>
<proteinExistence type="evidence at protein level"/>
<comment type="subcellular location">
    <subcellularLocation>
        <location evidence="7">Membrane</location>
        <topology evidence="7">Multi-pass membrane protein</topology>
    </subcellularLocation>
</comment>
<comment type="similarity">
    <text evidence="7">Belongs to the dispatched family.</text>
</comment>
<comment type="sequence caution" evidence="7">
    <conflict type="erroneous termination">
        <sequence resource="EMBL-CDS" id="BAB21833"/>
    </conflict>
    <text>Truncated C-terminus.</text>
</comment>
<keyword id="KW-0325">Glycoprotein</keyword>
<keyword id="KW-0472">Membrane</keyword>
<keyword id="KW-0488">Methylation</keyword>
<keyword id="KW-1267">Proteomics identification</keyword>
<keyword id="KW-1185">Reference proteome</keyword>
<keyword id="KW-0812">Transmembrane</keyword>
<keyword id="KW-1133">Transmembrane helix</keyword>
<gene>
    <name evidence="8" type="primary">DISP2</name>
    <name evidence="8" type="synonym">C15orf36</name>
    <name type="synonym">DISPB</name>
    <name type="synonym">KIAA1742</name>
    <name evidence="8" type="synonym">LINC00594</name>
</gene>
<evidence type="ECO:0000250" key="1">
    <source>
        <dbReference type="UniProtKB" id="Q8CIP5"/>
    </source>
</evidence>
<evidence type="ECO:0000255" key="2"/>
<evidence type="ECO:0000255" key="3">
    <source>
        <dbReference type="PROSITE-ProRule" id="PRU00199"/>
    </source>
</evidence>
<evidence type="ECO:0000256" key="4">
    <source>
        <dbReference type="SAM" id="MobiDB-lite"/>
    </source>
</evidence>
<evidence type="ECO:0000269" key="5">
    <source>
    </source>
</evidence>
<evidence type="ECO:0000269" key="6">
    <source>
    </source>
</evidence>
<evidence type="ECO:0000305" key="7"/>
<evidence type="ECO:0000312" key="8">
    <source>
        <dbReference type="HGNC" id="HGNC:19712"/>
    </source>
</evidence>
<dbReference type="EMBL" id="AB051529">
    <property type="protein sequence ID" value="BAB21833.2"/>
    <property type="status" value="ALT_SEQ"/>
    <property type="molecule type" value="mRNA"/>
</dbReference>
<dbReference type="EMBL" id="AC013356">
    <property type="status" value="NOT_ANNOTATED_CDS"/>
    <property type="molecule type" value="Genomic_DNA"/>
</dbReference>
<dbReference type="EMBL" id="BC151833">
    <property type="protein sequence ID" value="AAI51834.1"/>
    <property type="molecule type" value="mRNA"/>
</dbReference>
<dbReference type="EMBL" id="CR627480">
    <property type="protein sequence ID" value="CAH10680.1"/>
    <property type="molecule type" value="mRNA"/>
</dbReference>
<dbReference type="CCDS" id="CCDS10056.1"/>
<dbReference type="RefSeq" id="NP_277045.1">
    <property type="nucleotide sequence ID" value="NM_033510.3"/>
</dbReference>
<dbReference type="RefSeq" id="XP_011520427.1">
    <property type="nucleotide sequence ID" value="XM_011522125.2"/>
</dbReference>
<dbReference type="RefSeq" id="XP_016878176.1">
    <property type="nucleotide sequence ID" value="XM_017022687.1"/>
</dbReference>
<dbReference type="SMR" id="A7MBM2"/>
<dbReference type="BioGRID" id="124539">
    <property type="interactions" value="4"/>
</dbReference>
<dbReference type="FunCoup" id="A7MBM2">
    <property type="interactions" value="342"/>
</dbReference>
<dbReference type="IntAct" id="A7MBM2">
    <property type="interactions" value="2"/>
</dbReference>
<dbReference type="STRING" id="9606.ENSP00000267889"/>
<dbReference type="GlyCosmos" id="A7MBM2">
    <property type="glycosylation" value="3 sites, No reported glycans"/>
</dbReference>
<dbReference type="GlyGen" id="A7MBM2">
    <property type="glycosylation" value="5 sites, 2 N-linked glycans (2 sites)"/>
</dbReference>
<dbReference type="iPTMnet" id="A7MBM2"/>
<dbReference type="PhosphoSitePlus" id="A7MBM2"/>
<dbReference type="SwissPalm" id="A7MBM2"/>
<dbReference type="BioMuta" id="DISP2"/>
<dbReference type="jPOST" id="A7MBM2"/>
<dbReference type="MassIVE" id="A7MBM2"/>
<dbReference type="PaxDb" id="9606-ENSP00000267889"/>
<dbReference type="PeptideAtlas" id="A7MBM2"/>
<dbReference type="ProteomicsDB" id="1809"/>
<dbReference type="Antibodypedia" id="23061">
    <property type="antibodies" value="93 antibodies from 24 providers"/>
</dbReference>
<dbReference type="DNASU" id="85455"/>
<dbReference type="Ensembl" id="ENST00000267889.5">
    <property type="protein sequence ID" value="ENSP00000267889.3"/>
    <property type="gene ID" value="ENSG00000140323.6"/>
</dbReference>
<dbReference type="GeneID" id="85455"/>
<dbReference type="KEGG" id="hsa:85455"/>
<dbReference type="MANE-Select" id="ENST00000267889.5">
    <property type="protein sequence ID" value="ENSP00000267889.3"/>
    <property type="RefSeq nucleotide sequence ID" value="NM_033510.3"/>
    <property type="RefSeq protein sequence ID" value="NP_277045.1"/>
</dbReference>
<dbReference type="UCSC" id="uc001zlk.2">
    <property type="organism name" value="human"/>
</dbReference>
<dbReference type="AGR" id="HGNC:19712"/>
<dbReference type="CTD" id="85455"/>
<dbReference type="DisGeNET" id="85455"/>
<dbReference type="GeneCards" id="DISP2"/>
<dbReference type="HGNC" id="HGNC:19712">
    <property type="gene designation" value="DISP2"/>
</dbReference>
<dbReference type="HPA" id="ENSG00000140323">
    <property type="expression patterns" value="Tissue enriched (brain)"/>
</dbReference>
<dbReference type="MIM" id="607503">
    <property type="type" value="gene"/>
</dbReference>
<dbReference type="neXtProt" id="NX_A7MBM2"/>
<dbReference type="OpenTargets" id="ENSG00000140323"/>
<dbReference type="PharmGKB" id="PA134876083"/>
<dbReference type="VEuPathDB" id="HostDB:ENSG00000140323"/>
<dbReference type="eggNOG" id="KOG3664">
    <property type="taxonomic scope" value="Eukaryota"/>
</dbReference>
<dbReference type="GeneTree" id="ENSGT00940000159551"/>
<dbReference type="HOGENOM" id="CLU_004076_1_1_1"/>
<dbReference type="InParanoid" id="A7MBM2"/>
<dbReference type="OMA" id="MPVTIVW"/>
<dbReference type="OrthoDB" id="193905at2759"/>
<dbReference type="PAN-GO" id="A7MBM2">
    <property type="GO annotations" value="4 GO annotations based on evolutionary models"/>
</dbReference>
<dbReference type="PhylomeDB" id="A7MBM2"/>
<dbReference type="TreeFam" id="TF324144"/>
<dbReference type="PathwayCommons" id="A7MBM2"/>
<dbReference type="Reactome" id="R-HSA-5362798">
    <property type="pathway name" value="Release of Hh-Np from the secreting cell"/>
</dbReference>
<dbReference type="SignaLink" id="A7MBM2"/>
<dbReference type="BioGRID-ORCS" id="85455">
    <property type="hits" value="18 hits in 1148 CRISPR screens"/>
</dbReference>
<dbReference type="ChiTaRS" id="DISP2">
    <property type="organism name" value="human"/>
</dbReference>
<dbReference type="GenomeRNAi" id="85455"/>
<dbReference type="Pharos" id="A7MBM2">
    <property type="development level" value="Tbio"/>
</dbReference>
<dbReference type="PRO" id="PR:A7MBM2"/>
<dbReference type="Proteomes" id="UP000005640">
    <property type="component" value="Chromosome 15"/>
</dbReference>
<dbReference type="RNAct" id="A7MBM2">
    <property type="molecule type" value="protein"/>
</dbReference>
<dbReference type="Bgee" id="ENSG00000140323">
    <property type="expression patterns" value="Expressed in cerebellar cortex and 123 other cell types or tissues"/>
</dbReference>
<dbReference type="GO" id="GO:0016020">
    <property type="term" value="C:membrane"/>
    <property type="evidence" value="ECO:0000318"/>
    <property type="project" value="GO_Central"/>
</dbReference>
<dbReference type="GO" id="GO:0005886">
    <property type="term" value="C:plasma membrane"/>
    <property type="evidence" value="ECO:0000304"/>
    <property type="project" value="Reactome"/>
</dbReference>
<dbReference type="GO" id="GO:0007224">
    <property type="term" value="P:smoothened signaling pathway"/>
    <property type="evidence" value="ECO:0000318"/>
    <property type="project" value="GO_Central"/>
</dbReference>
<dbReference type="FunFam" id="1.20.1640.10:FF:000011">
    <property type="entry name" value="Dispatched RND transporter family member 1"/>
    <property type="match status" value="1"/>
</dbReference>
<dbReference type="FunFam" id="1.20.1640.10:FF:000026">
    <property type="entry name" value="Dispatched RND transporter family member 2"/>
    <property type="match status" value="1"/>
</dbReference>
<dbReference type="Gene3D" id="1.20.1640.10">
    <property type="entry name" value="Multidrug efflux transporter AcrB transmembrane domain"/>
    <property type="match status" value="2"/>
</dbReference>
<dbReference type="InterPro" id="IPR052081">
    <property type="entry name" value="Dispatched_Hh_regulator"/>
</dbReference>
<dbReference type="InterPro" id="IPR000731">
    <property type="entry name" value="SSD"/>
</dbReference>
<dbReference type="PANTHER" id="PTHR45951:SF2">
    <property type="entry name" value="PROTEIN DISPATCHED HOMOLOG 2"/>
    <property type="match status" value="1"/>
</dbReference>
<dbReference type="PANTHER" id="PTHR45951">
    <property type="entry name" value="PROTEIN DISPATCHED-RELATED"/>
    <property type="match status" value="1"/>
</dbReference>
<dbReference type="SUPFAM" id="SSF82866">
    <property type="entry name" value="Multidrug efflux transporter AcrB transmembrane domain"/>
    <property type="match status" value="2"/>
</dbReference>
<dbReference type="PROSITE" id="PS50156">
    <property type="entry name" value="SSD"/>
    <property type="match status" value="1"/>
</dbReference>
<protein>
    <recommendedName>
        <fullName>Protein dispatched homolog 2</fullName>
    </recommendedName>
</protein>
<accession>A7MBM2</accession>
<accession>Q6AHW3</accession>
<accession>Q9C0C1</accession>
<reference key="1">
    <citation type="journal article" date="2000" name="DNA Res.">
        <title>Prediction of the coding sequences of unidentified human genes. XIX. The complete sequences of 100 new cDNA clones from brain which code for large proteins in vitro.</title>
        <authorList>
            <person name="Nagase T."/>
            <person name="Kikuno R."/>
            <person name="Hattori A."/>
            <person name="Kondo Y."/>
            <person name="Okumura K."/>
            <person name="Ohara O."/>
        </authorList>
    </citation>
    <scope>NUCLEOTIDE SEQUENCE [LARGE SCALE MRNA]</scope>
    <scope>VARIANTS ALA-47 AND SER-56</scope>
    <source>
        <tissue>Brain</tissue>
    </source>
</reference>
<reference key="2">
    <citation type="journal article" date="2002" name="DNA Res.">
        <title>Construction of expression-ready cDNA clones for KIAA genes: manual curation of 330 KIAA cDNA clones.</title>
        <authorList>
            <person name="Nakajima D."/>
            <person name="Okazaki N."/>
            <person name="Yamakawa H."/>
            <person name="Kikuno R."/>
            <person name="Ohara O."/>
            <person name="Nagase T."/>
        </authorList>
    </citation>
    <scope>SEQUENCE REVISION</scope>
</reference>
<reference key="3">
    <citation type="journal article" date="2006" name="Nature">
        <title>Analysis of the DNA sequence and duplication history of human chromosome 15.</title>
        <authorList>
            <person name="Zody M.C."/>
            <person name="Garber M."/>
            <person name="Sharpe T."/>
            <person name="Young S.K."/>
            <person name="Rowen L."/>
            <person name="O'Neill K."/>
            <person name="Whittaker C.A."/>
            <person name="Kamal M."/>
            <person name="Chang J.L."/>
            <person name="Cuomo C.A."/>
            <person name="Dewar K."/>
            <person name="FitzGerald M.G."/>
            <person name="Kodira C.D."/>
            <person name="Madan A."/>
            <person name="Qin S."/>
            <person name="Yang X."/>
            <person name="Abbasi N."/>
            <person name="Abouelleil A."/>
            <person name="Arachchi H.M."/>
            <person name="Baradarani L."/>
            <person name="Birditt B."/>
            <person name="Bloom S."/>
            <person name="Bloom T."/>
            <person name="Borowsky M.L."/>
            <person name="Burke J."/>
            <person name="Butler J."/>
            <person name="Cook A."/>
            <person name="DeArellano K."/>
            <person name="DeCaprio D."/>
            <person name="Dorris L. III"/>
            <person name="Dors M."/>
            <person name="Eichler E.E."/>
            <person name="Engels R."/>
            <person name="Fahey J."/>
            <person name="Fleetwood P."/>
            <person name="Friedman C."/>
            <person name="Gearin G."/>
            <person name="Hall J.L."/>
            <person name="Hensley G."/>
            <person name="Johnson E."/>
            <person name="Jones C."/>
            <person name="Kamat A."/>
            <person name="Kaur A."/>
            <person name="Locke D.P."/>
            <person name="Madan A."/>
            <person name="Munson G."/>
            <person name="Jaffe D.B."/>
            <person name="Lui A."/>
            <person name="Macdonald P."/>
            <person name="Mauceli E."/>
            <person name="Naylor J.W."/>
            <person name="Nesbitt R."/>
            <person name="Nicol R."/>
            <person name="O'Leary S.B."/>
            <person name="Ratcliffe A."/>
            <person name="Rounsley S."/>
            <person name="She X."/>
            <person name="Sneddon K.M.B."/>
            <person name="Stewart S."/>
            <person name="Sougnez C."/>
            <person name="Stone S.M."/>
            <person name="Topham K."/>
            <person name="Vincent D."/>
            <person name="Wang S."/>
            <person name="Zimmer A.R."/>
            <person name="Birren B.W."/>
            <person name="Hood L."/>
            <person name="Lander E.S."/>
            <person name="Nusbaum C."/>
        </authorList>
    </citation>
    <scope>NUCLEOTIDE SEQUENCE [LARGE SCALE GENOMIC DNA]</scope>
</reference>
<reference key="4">
    <citation type="journal article" date="2004" name="Genome Res.">
        <title>The status, quality, and expansion of the NIH full-length cDNA project: the Mammalian Gene Collection (MGC).</title>
        <authorList>
            <consortium name="The MGC Project Team"/>
        </authorList>
    </citation>
    <scope>NUCLEOTIDE SEQUENCE [LARGE SCALE MRNA] OF 1-665</scope>
    <scope>VARIANTS ALA-47 AND SER-56</scope>
</reference>
<reference key="5">
    <citation type="journal article" date="2007" name="BMC Genomics">
        <title>The full-ORF clone resource of the German cDNA consortium.</title>
        <authorList>
            <person name="Bechtel S."/>
            <person name="Rosenfelder H."/>
            <person name="Duda A."/>
            <person name="Schmidt C.P."/>
            <person name="Ernst U."/>
            <person name="Wellenreuther R."/>
            <person name="Mehrle A."/>
            <person name="Schuster C."/>
            <person name="Bahr A."/>
            <person name="Bloecker H."/>
            <person name="Heubner D."/>
            <person name="Hoerlein A."/>
            <person name="Michel G."/>
            <person name="Wedler H."/>
            <person name="Koehrer K."/>
            <person name="Ottenwaelder B."/>
            <person name="Poustka A."/>
            <person name="Wiemann S."/>
            <person name="Schupp I."/>
        </authorList>
    </citation>
    <scope>NUCLEOTIDE SEQUENCE [LARGE SCALE MRNA] OF 1279-1401</scope>
    <source>
        <tissue>Brain</tissue>
    </source>
</reference>
<organism>
    <name type="scientific">Homo sapiens</name>
    <name type="common">Human</name>
    <dbReference type="NCBI Taxonomy" id="9606"/>
    <lineage>
        <taxon>Eukaryota</taxon>
        <taxon>Metazoa</taxon>
        <taxon>Chordata</taxon>
        <taxon>Craniata</taxon>
        <taxon>Vertebrata</taxon>
        <taxon>Euteleostomi</taxon>
        <taxon>Mammalia</taxon>
        <taxon>Eutheria</taxon>
        <taxon>Euarchontoglires</taxon>
        <taxon>Primates</taxon>
        <taxon>Haplorrhini</taxon>
        <taxon>Catarrhini</taxon>
        <taxon>Hominidae</taxon>
        <taxon>Homo</taxon>
    </lineage>
</organism>